<dbReference type="EC" id="3.4.22.29" evidence="2"/>
<dbReference type="EC" id="3.6.1.15" evidence="2"/>
<dbReference type="EC" id="3.4.22.28" evidence="11"/>
<dbReference type="EC" id="2.7.7.48" evidence="9"/>
<dbReference type="EMBL" id="D00239">
    <property type="protein sequence ID" value="BAA00168.1"/>
    <property type="molecule type" value="Genomic_RNA"/>
</dbReference>
<dbReference type="PIR" id="A28699">
    <property type="entry name" value="GNNY1B"/>
</dbReference>
<dbReference type="PDB" id="1XR6">
    <property type="method" value="X-ray"/>
    <property type="resolution" value="2.50 A"/>
    <property type="chains" value="A=1698-2157"/>
</dbReference>
<dbReference type="PDBsum" id="1XR6"/>
<dbReference type="SMR" id="P12916"/>
<dbReference type="BindingDB" id="P12916"/>
<dbReference type="MEROPS" id="C03.007"/>
<dbReference type="MEROPS" id="C03.021"/>
<dbReference type="MEROPS" id="N08.001"/>
<dbReference type="EvolutionaryTrace" id="P12916"/>
<dbReference type="Proteomes" id="UP000007681">
    <property type="component" value="Genome"/>
</dbReference>
<dbReference type="GO" id="GO:0044162">
    <property type="term" value="C:host cell cytoplasmic vesicle membrane"/>
    <property type="evidence" value="ECO:0007669"/>
    <property type="project" value="UniProtKB-SubCell"/>
</dbReference>
<dbReference type="GO" id="GO:0042025">
    <property type="term" value="C:host cell nucleus"/>
    <property type="evidence" value="ECO:0007669"/>
    <property type="project" value="UniProtKB-SubCell"/>
</dbReference>
<dbReference type="GO" id="GO:0016020">
    <property type="term" value="C:membrane"/>
    <property type="evidence" value="ECO:0007669"/>
    <property type="project" value="UniProtKB-KW"/>
</dbReference>
<dbReference type="GO" id="GO:0039618">
    <property type="term" value="C:T=pseudo3 icosahedral viral capsid"/>
    <property type="evidence" value="ECO:0007669"/>
    <property type="project" value="UniProtKB-KW"/>
</dbReference>
<dbReference type="GO" id="GO:0005524">
    <property type="term" value="F:ATP binding"/>
    <property type="evidence" value="ECO:0007669"/>
    <property type="project" value="UniProtKB-KW"/>
</dbReference>
<dbReference type="GO" id="GO:0016887">
    <property type="term" value="F:ATP hydrolysis activity"/>
    <property type="evidence" value="ECO:0007669"/>
    <property type="project" value="InterPro"/>
</dbReference>
<dbReference type="GO" id="GO:0015267">
    <property type="term" value="F:channel activity"/>
    <property type="evidence" value="ECO:0007669"/>
    <property type="project" value="UniProtKB-KW"/>
</dbReference>
<dbReference type="GO" id="GO:0004197">
    <property type="term" value="F:cysteine-type endopeptidase activity"/>
    <property type="evidence" value="ECO:0007669"/>
    <property type="project" value="UniProtKB-EC"/>
</dbReference>
<dbReference type="GO" id="GO:0003723">
    <property type="term" value="F:RNA binding"/>
    <property type="evidence" value="ECO:0007669"/>
    <property type="project" value="UniProtKB-KW"/>
</dbReference>
<dbReference type="GO" id="GO:0003724">
    <property type="term" value="F:RNA helicase activity"/>
    <property type="evidence" value="ECO:0007669"/>
    <property type="project" value="InterPro"/>
</dbReference>
<dbReference type="GO" id="GO:0003968">
    <property type="term" value="F:RNA-directed RNA polymerase activity"/>
    <property type="evidence" value="ECO:0007669"/>
    <property type="project" value="UniProtKB-KW"/>
</dbReference>
<dbReference type="GO" id="GO:0005198">
    <property type="term" value="F:structural molecule activity"/>
    <property type="evidence" value="ECO:0007669"/>
    <property type="project" value="InterPro"/>
</dbReference>
<dbReference type="GO" id="GO:0008270">
    <property type="term" value="F:zinc ion binding"/>
    <property type="evidence" value="ECO:0007669"/>
    <property type="project" value="UniProtKB-KW"/>
</dbReference>
<dbReference type="GO" id="GO:0006260">
    <property type="term" value="P:DNA replication"/>
    <property type="evidence" value="ECO:0007669"/>
    <property type="project" value="UniProtKB-KW"/>
</dbReference>
<dbReference type="GO" id="GO:0006351">
    <property type="term" value="P:DNA-templated transcription"/>
    <property type="evidence" value="ECO:0007669"/>
    <property type="project" value="InterPro"/>
</dbReference>
<dbReference type="GO" id="GO:0075509">
    <property type="term" value="P:endocytosis involved in viral entry into host cell"/>
    <property type="evidence" value="ECO:0007669"/>
    <property type="project" value="UniProtKB-KW"/>
</dbReference>
<dbReference type="GO" id="GO:0034220">
    <property type="term" value="P:monoatomic ion transmembrane transport"/>
    <property type="evidence" value="ECO:0007669"/>
    <property type="project" value="UniProtKB-KW"/>
</dbReference>
<dbReference type="GO" id="GO:0006508">
    <property type="term" value="P:proteolysis"/>
    <property type="evidence" value="ECO:0007669"/>
    <property type="project" value="UniProtKB-KW"/>
</dbReference>
<dbReference type="GO" id="GO:0044694">
    <property type="term" value="P:symbiont genome entry into host cell via pore formation in plasma membrane"/>
    <property type="evidence" value="ECO:0007669"/>
    <property type="project" value="UniProtKB-KW"/>
</dbReference>
<dbReference type="GO" id="GO:0039520">
    <property type="term" value="P:symbiont-mediated activation of host autophagy"/>
    <property type="evidence" value="ECO:0007669"/>
    <property type="project" value="UniProtKB-KW"/>
</dbReference>
<dbReference type="GO" id="GO:0039540">
    <property type="term" value="P:symbiont-mediated suppression of host cytoplasmic pattern recognition receptor signaling pathway via inhibition of RIG-I activity"/>
    <property type="evidence" value="ECO:0007669"/>
    <property type="project" value="UniProtKB-KW"/>
</dbReference>
<dbReference type="GO" id="GO:0039522">
    <property type="term" value="P:symbiont-mediated suppression of host mRNA export from nucleus"/>
    <property type="evidence" value="ECO:0007669"/>
    <property type="project" value="UniProtKB-KW"/>
</dbReference>
<dbReference type="GO" id="GO:0039694">
    <property type="term" value="P:viral RNA genome replication"/>
    <property type="evidence" value="ECO:0007669"/>
    <property type="project" value="InterPro"/>
</dbReference>
<dbReference type="GO" id="GO:0019062">
    <property type="term" value="P:virion attachment to host cell"/>
    <property type="evidence" value="ECO:0007669"/>
    <property type="project" value="UniProtKB-KW"/>
</dbReference>
<dbReference type="CDD" id="cd00205">
    <property type="entry name" value="rhv_like"/>
    <property type="match status" value="3"/>
</dbReference>
<dbReference type="FunFam" id="2.40.10.10:FF:000020">
    <property type="entry name" value="Genome polyprotein"/>
    <property type="match status" value="1"/>
</dbReference>
<dbReference type="FunFam" id="2.60.120.20:FF:000001">
    <property type="entry name" value="Genome polyprotein"/>
    <property type="match status" value="1"/>
</dbReference>
<dbReference type="FunFam" id="2.60.120.20:FF:000002">
    <property type="entry name" value="Genome polyprotein"/>
    <property type="match status" value="1"/>
</dbReference>
<dbReference type="FunFam" id="2.60.120.20:FF:000003">
    <property type="entry name" value="Genome polyprotein"/>
    <property type="match status" value="1"/>
</dbReference>
<dbReference type="FunFam" id="4.10.880.10:FF:000002">
    <property type="entry name" value="Genome polyprotein"/>
    <property type="match status" value="1"/>
</dbReference>
<dbReference type="Gene3D" id="1.20.960.20">
    <property type="match status" value="1"/>
</dbReference>
<dbReference type="Gene3D" id="2.60.120.20">
    <property type="match status" value="3"/>
</dbReference>
<dbReference type="Gene3D" id="3.30.70.270">
    <property type="match status" value="1"/>
</dbReference>
<dbReference type="Gene3D" id="3.40.50.300">
    <property type="entry name" value="P-loop containing nucleotide triphosphate hydrolases"/>
    <property type="match status" value="1"/>
</dbReference>
<dbReference type="Gene3D" id="6.10.20.20">
    <property type="entry name" value="Poliovirus 3A protein-like"/>
    <property type="match status" value="1"/>
</dbReference>
<dbReference type="Gene3D" id="4.10.880.10">
    <property type="entry name" value="Poliovirus 3D polymerase Domain 1 (Nucleotidyltransferase)"/>
    <property type="match status" value="2"/>
</dbReference>
<dbReference type="Gene3D" id="2.40.10.10">
    <property type="entry name" value="Trypsin-like serine proteases"/>
    <property type="match status" value="4"/>
</dbReference>
<dbReference type="InterPro" id="IPR003593">
    <property type="entry name" value="AAA+_ATPase"/>
</dbReference>
<dbReference type="InterPro" id="IPR043502">
    <property type="entry name" value="DNA/RNA_pol_sf"/>
</dbReference>
<dbReference type="InterPro" id="IPR000605">
    <property type="entry name" value="Helicase_SF3_ssDNA/RNA_vir"/>
</dbReference>
<dbReference type="InterPro" id="IPR014759">
    <property type="entry name" value="Helicase_SF3_ssRNA_vir"/>
</dbReference>
<dbReference type="InterPro" id="IPR027417">
    <property type="entry name" value="P-loop_NTPase"/>
</dbReference>
<dbReference type="InterPro" id="IPR014838">
    <property type="entry name" value="P3A"/>
</dbReference>
<dbReference type="InterPro" id="IPR036203">
    <property type="entry name" value="P3A_soluble_dom"/>
</dbReference>
<dbReference type="InterPro" id="IPR044067">
    <property type="entry name" value="PCV_3C_PRO"/>
</dbReference>
<dbReference type="InterPro" id="IPR000081">
    <property type="entry name" value="Peptidase_C3"/>
</dbReference>
<dbReference type="InterPro" id="IPR000199">
    <property type="entry name" value="Peptidase_C3A/C3B_picornavir"/>
</dbReference>
<dbReference type="InterPro" id="IPR009003">
    <property type="entry name" value="Peptidase_S1_PA"/>
</dbReference>
<dbReference type="InterPro" id="IPR043504">
    <property type="entry name" value="Peptidase_S1_PA_chymotrypsin"/>
</dbReference>
<dbReference type="InterPro" id="IPR003138">
    <property type="entry name" value="Pico_P1A"/>
</dbReference>
<dbReference type="InterPro" id="IPR002527">
    <property type="entry name" value="Pico_P2B"/>
</dbReference>
<dbReference type="InterPro" id="IPR001676">
    <property type="entry name" value="Picornavirus_capsid"/>
</dbReference>
<dbReference type="InterPro" id="IPR043128">
    <property type="entry name" value="Rev_trsase/Diguanyl_cyclase"/>
</dbReference>
<dbReference type="InterPro" id="IPR033703">
    <property type="entry name" value="Rhv-like"/>
</dbReference>
<dbReference type="InterPro" id="IPR001205">
    <property type="entry name" value="RNA-dir_pol_C"/>
</dbReference>
<dbReference type="InterPro" id="IPR007094">
    <property type="entry name" value="RNA-dir_pol_PSvirus"/>
</dbReference>
<dbReference type="InterPro" id="IPR029053">
    <property type="entry name" value="Viral_coat"/>
</dbReference>
<dbReference type="Pfam" id="PF08727">
    <property type="entry name" value="P3A"/>
    <property type="match status" value="1"/>
</dbReference>
<dbReference type="Pfam" id="PF00548">
    <property type="entry name" value="Peptidase_C3"/>
    <property type="match status" value="1"/>
</dbReference>
<dbReference type="Pfam" id="PF02226">
    <property type="entry name" value="Pico_P1A"/>
    <property type="match status" value="1"/>
</dbReference>
<dbReference type="Pfam" id="PF00947">
    <property type="entry name" value="Pico_P2A"/>
    <property type="match status" value="1"/>
</dbReference>
<dbReference type="Pfam" id="PF01552">
    <property type="entry name" value="Pico_P2B"/>
    <property type="match status" value="1"/>
</dbReference>
<dbReference type="Pfam" id="PF00680">
    <property type="entry name" value="RdRP_1"/>
    <property type="match status" value="1"/>
</dbReference>
<dbReference type="Pfam" id="PF00073">
    <property type="entry name" value="Rhv"/>
    <property type="match status" value="3"/>
</dbReference>
<dbReference type="Pfam" id="PF00910">
    <property type="entry name" value="RNA_helicase"/>
    <property type="match status" value="1"/>
</dbReference>
<dbReference type="SMART" id="SM00382">
    <property type="entry name" value="AAA"/>
    <property type="match status" value="1"/>
</dbReference>
<dbReference type="SUPFAM" id="SSF56672">
    <property type="entry name" value="DNA/RNA polymerases"/>
    <property type="match status" value="1"/>
</dbReference>
<dbReference type="SUPFAM" id="SSF52540">
    <property type="entry name" value="P-loop containing nucleoside triphosphate hydrolases"/>
    <property type="match status" value="1"/>
</dbReference>
<dbReference type="SUPFAM" id="SSF88633">
    <property type="entry name" value="Positive stranded ssRNA viruses"/>
    <property type="match status" value="2"/>
</dbReference>
<dbReference type="SUPFAM" id="SSF89043">
    <property type="entry name" value="Soluble domain of poliovirus core protein 3a"/>
    <property type="match status" value="1"/>
</dbReference>
<dbReference type="SUPFAM" id="SSF50494">
    <property type="entry name" value="Trypsin-like serine proteases"/>
    <property type="match status" value="2"/>
</dbReference>
<dbReference type="PROSITE" id="PS51874">
    <property type="entry name" value="PCV_3C_PRO"/>
    <property type="match status" value="1"/>
</dbReference>
<dbReference type="PROSITE" id="PS50507">
    <property type="entry name" value="RDRP_SSRNA_POS"/>
    <property type="match status" value="1"/>
</dbReference>
<dbReference type="PROSITE" id="PS51218">
    <property type="entry name" value="SF3_HELICASE_2"/>
    <property type="match status" value="1"/>
</dbReference>
<evidence type="ECO:0000250" key="1">
    <source>
        <dbReference type="UniProtKB" id="B9VUU3"/>
    </source>
</evidence>
<evidence type="ECO:0000250" key="2">
    <source>
        <dbReference type="UniProtKB" id="P03300"/>
    </source>
</evidence>
<evidence type="ECO:0000250" key="3">
    <source>
        <dbReference type="UniProtKB" id="P03301"/>
    </source>
</evidence>
<evidence type="ECO:0000250" key="4">
    <source>
        <dbReference type="UniProtKB" id="P03303"/>
    </source>
</evidence>
<evidence type="ECO:0000250" key="5">
    <source>
        <dbReference type="UniProtKB" id="P03313"/>
    </source>
</evidence>
<evidence type="ECO:0000250" key="6">
    <source>
        <dbReference type="UniProtKB" id="P04936"/>
    </source>
</evidence>
<evidence type="ECO:0000250" key="7">
    <source>
        <dbReference type="UniProtKB" id="Q66478"/>
    </source>
</evidence>
<evidence type="ECO:0000255" key="8"/>
<evidence type="ECO:0000255" key="9">
    <source>
        <dbReference type="PROSITE-ProRule" id="PRU00539"/>
    </source>
</evidence>
<evidence type="ECO:0000255" key="10">
    <source>
        <dbReference type="PROSITE-ProRule" id="PRU00551"/>
    </source>
</evidence>
<evidence type="ECO:0000255" key="11">
    <source>
        <dbReference type="PROSITE-ProRule" id="PRU01222"/>
    </source>
</evidence>
<evidence type="ECO:0000305" key="12"/>
<evidence type="ECO:0007829" key="13">
    <source>
        <dbReference type="PDB" id="1XR6"/>
    </source>
</evidence>
<feature type="initiator methionine" description="Removed; by host" evidence="2">
    <location>
        <position position="1"/>
    </location>
</feature>
<feature type="chain" id="PRO_0000426491" description="Genome polyprotein">
    <location>
        <begin position="2"/>
        <end position="2157"/>
    </location>
</feature>
<feature type="chain" id="PRO_0000426492" description="P1">
    <location>
        <begin position="2"/>
        <end position="857"/>
    </location>
</feature>
<feature type="chain" id="PRO_0000426493" description="Capsid protein VP0">
    <location>
        <begin position="2"/>
        <end position="332"/>
    </location>
</feature>
<feature type="chain" id="PRO_0000426494" description="Capsid protein VP4">
    <location>
        <begin position="2"/>
        <end position="69"/>
    </location>
</feature>
<feature type="chain" id="PRO_0000426495" description="Capsid protein VP2">
    <location>
        <begin position="70"/>
        <end position="332"/>
    </location>
</feature>
<feature type="chain" id="PRO_0000426496" description="Capsid protein VP3">
    <location>
        <begin position="333"/>
        <end position="564"/>
    </location>
</feature>
<feature type="chain" id="PRO_0000426497" description="Capsid protein VP1">
    <location>
        <begin position="565"/>
        <end position="857"/>
    </location>
</feature>
<feature type="chain" id="PRO_0000426498" description="P2">
    <location>
        <begin position="858"/>
        <end position="1416"/>
    </location>
</feature>
<feature type="chain" id="PRO_0000426499" description="Protease 2A">
    <location>
        <begin position="858"/>
        <end position="999"/>
    </location>
</feature>
<feature type="chain" id="PRO_0000040004" description="Protein 2B">
    <location>
        <begin position="1000"/>
        <end position="1094"/>
    </location>
</feature>
<feature type="chain" id="PRO_0000040005" description="Protein 2C">
    <location>
        <begin position="1095"/>
        <end position="1416"/>
    </location>
</feature>
<feature type="chain" id="PRO_0000426500" description="P3">
    <location>
        <begin position="1417"/>
        <end position="2157"/>
    </location>
</feature>
<feature type="chain" id="PRO_0000426501" description="Protein 3AB">
    <location>
        <begin position="1417"/>
        <end position="1514"/>
    </location>
</feature>
<feature type="chain" id="PRO_0000040006" description="Protein 3A">
    <location>
        <begin position="1417"/>
        <end position="1493"/>
    </location>
</feature>
<feature type="chain" id="PRO_0000426502" description="Viral protein genome-linked">
    <location>
        <begin position="1494"/>
        <end position="1514"/>
    </location>
</feature>
<feature type="chain" id="PRO_0000426503" description="Protein 3CD">
    <location>
        <begin position="1515"/>
        <end position="2157"/>
    </location>
</feature>
<feature type="chain" id="PRO_0000426504" description="Protease 3C">
    <location>
        <begin position="1515"/>
        <end position="1697"/>
    </location>
</feature>
<feature type="chain" id="PRO_0000426505" description="RNA-directed RNA polymerase">
    <location>
        <begin position="1698"/>
        <end position="2157"/>
    </location>
</feature>
<feature type="topological domain" description="Cytoplasmic" evidence="8">
    <location>
        <begin position="2"/>
        <end position="1470"/>
    </location>
</feature>
<feature type="intramembrane region" evidence="8">
    <location>
        <begin position="1471"/>
        <end position="1486"/>
    </location>
</feature>
<feature type="topological domain" description="Cytoplasmic" evidence="8">
    <location>
        <begin position="1487"/>
        <end position="2157"/>
    </location>
</feature>
<feature type="domain" description="SF3 helicase" evidence="10">
    <location>
        <begin position="1188"/>
        <end position="1350"/>
    </location>
</feature>
<feature type="domain" description="Peptidase C3" evidence="11">
    <location>
        <begin position="1515"/>
        <end position="1693"/>
    </location>
</feature>
<feature type="domain" description="RdRp catalytic" evidence="9">
    <location>
        <begin position="1925"/>
        <end position="2038"/>
    </location>
</feature>
<feature type="zinc finger region" description="C4-type; degenerate" evidence="1">
    <location>
        <begin position="1357"/>
        <end position="1373"/>
    </location>
</feature>
<feature type="region of interest" description="Amphipathic alpha-helix" evidence="8">
    <location>
        <begin position="567"/>
        <end position="584"/>
    </location>
</feature>
<feature type="region of interest" description="Oligomerization" evidence="2">
    <location>
        <begin position="1095"/>
        <end position="1228"/>
    </location>
</feature>
<feature type="region of interest" description="Membrane-binding" evidence="2">
    <location>
        <begin position="1095"/>
        <end position="1164"/>
    </location>
</feature>
<feature type="region of interest" description="RNA-binding" evidence="2">
    <location>
        <begin position="1116"/>
        <end position="1120"/>
    </location>
</feature>
<feature type="region of interest" description="RNA-binding" evidence="2">
    <location>
        <begin position="1400"/>
        <end position="1407"/>
    </location>
</feature>
<feature type="region of interest" description="Oligomerization" evidence="2">
    <location>
        <begin position="1411"/>
        <end position="1416"/>
    </location>
</feature>
<feature type="active site" description="For protease 2A activity" evidence="2">
    <location>
        <position position="875"/>
    </location>
</feature>
<feature type="active site" description="For protease 2A activity" evidence="2">
    <location>
        <position position="892"/>
    </location>
</feature>
<feature type="active site" description="For protease 2A activity" evidence="2">
    <location>
        <position position="963"/>
    </location>
</feature>
<feature type="active site" description="For protease 3C activity" evidence="11">
    <location>
        <position position="1554"/>
    </location>
</feature>
<feature type="active site" description="For protease 3C activity" evidence="11">
    <location>
        <position position="1585"/>
    </location>
</feature>
<feature type="active site" description="For protease 3C activity" evidence="11">
    <location>
        <position position="1661"/>
    </location>
</feature>
<feature type="binding site" evidence="6">
    <location>
        <position position="909"/>
    </location>
    <ligand>
        <name>Zn(2+)</name>
        <dbReference type="ChEBI" id="CHEBI:29105"/>
        <label>1</label>
        <note>structural</note>
    </ligand>
</feature>
<feature type="binding site" evidence="6">
    <location>
        <position position="911"/>
    </location>
    <ligand>
        <name>Zn(2+)</name>
        <dbReference type="ChEBI" id="CHEBI:29105"/>
        <label>1</label>
        <note>structural</note>
    </ligand>
</feature>
<feature type="binding site" evidence="6">
    <location>
        <position position="969"/>
    </location>
    <ligand>
        <name>Zn(2+)</name>
        <dbReference type="ChEBI" id="CHEBI:29105"/>
        <label>1</label>
        <note>structural</note>
    </ligand>
</feature>
<feature type="binding site" evidence="6">
    <location>
        <position position="971"/>
    </location>
    <ligand>
        <name>Zn(2+)</name>
        <dbReference type="ChEBI" id="CHEBI:29105"/>
        <label>1</label>
        <note>structural</note>
    </ligand>
</feature>
<feature type="binding site" evidence="1">
    <location>
        <position position="1357"/>
    </location>
    <ligand>
        <name>Zn(2+)</name>
        <dbReference type="ChEBI" id="CHEBI:29105"/>
        <label>2</label>
    </ligand>
</feature>
<feature type="binding site" evidence="1">
    <location>
        <position position="1368"/>
    </location>
    <ligand>
        <name>Zn(2+)</name>
        <dbReference type="ChEBI" id="CHEBI:29105"/>
        <label>2</label>
    </ligand>
</feature>
<feature type="binding site" evidence="1">
    <location>
        <position position="1373"/>
    </location>
    <ligand>
        <name>Zn(2+)</name>
        <dbReference type="ChEBI" id="CHEBI:29105"/>
        <label>2</label>
    </ligand>
</feature>
<feature type="binding site" evidence="2">
    <location>
        <position position="1931"/>
    </location>
    <ligand>
        <name>Mg(2+)</name>
        <dbReference type="ChEBI" id="CHEBI:18420"/>
        <label>1</label>
        <note>catalytic; for RdRp activity</note>
    </ligand>
</feature>
<feature type="binding site" evidence="2">
    <location>
        <position position="1931"/>
    </location>
    <ligand>
        <name>Mg(2+)</name>
        <dbReference type="ChEBI" id="CHEBI:18420"/>
        <label>2</label>
        <note>catalytic; for RdRp activity</note>
    </ligand>
</feature>
<feature type="binding site" evidence="2">
    <location>
        <position position="2024"/>
    </location>
    <ligand>
        <name>Mg(2+)</name>
        <dbReference type="ChEBI" id="CHEBI:18420"/>
        <label>1</label>
        <note>catalytic; for RdRp activity</note>
    </ligand>
</feature>
<feature type="binding site" evidence="2">
    <location>
        <position position="2024"/>
    </location>
    <ligand>
        <name>Mg(2+)</name>
        <dbReference type="ChEBI" id="CHEBI:18420"/>
        <label>2</label>
        <note>catalytic; for RdRp activity</note>
    </ligand>
</feature>
<feature type="site" description="Cleavage; by autolysis" evidence="2">
    <location>
        <begin position="69"/>
        <end position="70"/>
    </location>
</feature>
<feature type="site" description="Cleavage; by protease 3C" evidence="3">
    <location>
        <begin position="332"/>
        <end position="333"/>
    </location>
</feature>
<feature type="site" description="Cleavage; by autolysis" evidence="3">
    <location>
        <begin position="857"/>
        <end position="858"/>
    </location>
</feature>
<feature type="site" description="Cleavage; by protease 3C" evidence="3">
    <location>
        <begin position="999"/>
        <end position="1000"/>
    </location>
</feature>
<feature type="site" description="Cleavage; by protease 3C" evidence="3">
    <location>
        <begin position="1094"/>
        <end position="1095"/>
    </location>
</feature>
<feature type="site" description="Involved in the interaction with host RTN3" evidence="7">
    <location>
        <position position="1119"/>
    </location>
</feature>
<feature type="site" description="Cleavage; by protease 3C" evidence="3">
    <location>
        <begin position="1416"/>
        <end position="1417"/>
    </location>
</feature>
<feature type="site" description="Cleavage; by protease 3C" evidence="3">
    <location>
        <begin position="1493"/>
        <end position="1494"/>
    </location>
</feature>
<feature type="site" description="Cleavage; by protease 3C" evidence="3">
    <location>
        <begin position="1514"/>
        <end position="1515"/>
    </location>
</feature>
<feature type="site" description="Cleavage; by protease 3C" evidence="3">
    <location>
        <begin position="1697"/>
        <end position="1698"/>
    </location>
</feature>
<feature type="modified residue" description="O-(5'-phospho-RNA)-tyrosine" evidence="2">
    <location>
        <position position="1496"/>
    </location>
</feature>
<feature type="lipid moiety-binding region" description="N-myristoyl glycine; by host" evidence="2">
    <location>
        <position position="2"/>
    </location>
</feature>
<feature type="strand" evidence="13">
    <location>
        <begin position="1699"/>
        <end position="1705"/>
    </location>
</feature>
<feature type="helix" evidence="13">
    <location>
        <begin position="1706"/>
        <end position="1709"/>
    </location>
</feature>
<feature type="turn" evidence="13">
    <location>
        <begin position="1726"/>
        <end position="1730"/>
    </location>
</feature>
<feature type="helix" evidence="13">
    <location>
        <begin position="1751"/>
        <end position="1756"/>
    </location>
</feature>
<feature type="helix" evidence="13">
    <location>
        <begin position="1769"/>
        <end position="1783"/>
    </location>
</feature>
<feature type="helix" evidence="13">
    <location>
        <begin position="1794"/>
        <end position="1799"/>
    </location>
</feature>
<feature type="strand" evidence="13">
    <location>
        <begin position="1802"/>
        <end position="1804"/>
    </location>
</feature>
<feature type="strand" evidence="13">
    <location>
        <begin position="1809"/>
        <end position="1811"/>
    </location>
</feature>
<feature type="helix" evidence="13">
    <location>
        <begin position="1817"/>
        <end position="1820"/>
    </location>
</feature>
<feature type="helix" evidence="13">
    <location>
        <begin position="1824"/>
        <end position="1827"/>
    </location>
</feature>
<feature type="turn" evidence="13">
    <location>
        <begin position="1830"/>
        <end position="1833"/>
    </location>
</feature>
<feature type="helix" evidence="13">
    <location>
        <begin position="1836"/>
        <end position="1845"/>
    </location>
</feature>
<feature type="strand" evidence="13">
    <location>
        <begin position="1851"/>
        <end position="1855"/>
    </location>
</feature>
<feature type="helix" evidence="13">
    <location>
        <begin position="1862"/>
        <end position="1866"/>
    </location>
</feature>
<feature type="strand" evidence="13">
    <location>
        <begin position="1872"/>
        <end position="1875"/>
    </location>
</feature>
<feature type="helix" evidence="13">
    <location>
        <begin position="1878"/>
        <end position="1897"/>
    </location>
</feature>
<feature type="turn" evidence="13">
    <location>
        <begin position="1901"/>
        <end position="1904"/>
    </location>
</feature>
<feature type="helix" evidence="13">
    <location>
        <begin position="1911"/>
        <end position="1921"/>
    </location>
</feature>
<feature type="strand" evidence="13">
    <location>
        <begin position="1924"/>
        <end position="1929"/>
    </location>
</feature>
<feature type="strand" evidence="13">
    <location>
        <begin position="1931"/>
        <end position="1934"/>
    </location>
</feature>
<feature type="helix" evidence="13">
    <location>
        <begin position="1936"/>
        <end position="1938"/>
    </location>
</feature>
<feature type="helix" evidence="13">
    <location>
        <begin position="1941"/>
        <end position="1953"/>
    </location>
</feature>
<feature type="helix" evidence="13">
    <location>
        <begin position="1959"/>
        <end position="1961"/>
    </location>
</feature>
<feature type="helix" evidence="13">
    <location>
        <begin position="1962"/>
        <end position="1965"/>
    </location>
</feature>
<feature type="strand" evidence="13">
    <location>
        <begin position="1966"/>
        <end position="1971"/>
    </location>
</feature>
<feature type="strand" evidence="13">
    <location>
        <begin position="1974"/>
        <end position="1981"/>
    </location>
</feature>
<feature type="helix" evidence="13">
    <location>
        <begin position="1989"/>
        <end position="2008"/>
    </location>
</feature>
<feature type="helix" evidence="13">
    <location>
        <begin position="2014"/>
        <end position="2016"/>
    </location>
</feature>
<feature type="strand" evidence="13">
    <location>
        <begin position="2018"/>
        <end position="2022"/>
    </location>
</feature>
<feature type="strand" evidence="13">
    <location>
        <begin position="2025"/>
        <end position="2032"/>
    </location>
</feature>
<feature type="helix" evidence="13">
    <location>
        <begin position="2036"/>
        <end position="2041"/>
    </location>
</feature>
<feature type="helix" evidence="13">
    <location>
        <begin position="2042"/>
        <end position="2046"/>
    </location>
</feature>
<feature type="turn" evidence="13">
    <location>
        <begin position="2064"/>
        <end position="2066"/>
    </location>
</feature>
<feature type="strand" evidence="13">
    <location>
        <begin position="2072"/>
        <end position="2076"/>
    </location>
</feature>
<feature type="strand" evidence="13">
    <location>
        <begin position="2078"/>
        <end position="2080"/>
    </location>
</feature>
<feature type="strand" evidence="13">
    <location>
        <begin position="2083"/>
        <end position="2087"/>
    </location>
</feature>
<feature type="helix" evidence="13">
    <location>
        <begin position="2090"/>
        <end position="2097"/>
    </location>
</feature>
<feature type="strand" evidence="13">
    <location>
        <begin position="2099"/>
        <end position="2101"/>
    </location>
</feature>
<feature type="helix" evidence="13">
    <location>
        <begin position="2103"/>
        <end position="2105"/>
    </location>
</feature>
<feature type="helix" evidence="13">
    <location>
        <begin position="2106"/>
        <end position="2117"/>
    </location>
</feature>
<feature type="helix" evidence="13">
    <location>
        <begin position="2118"/>
        <end position="2120"/>
    </location>
</feature>
<feature type="helix" evidence="13">
    <location>
        <begin position="2122"/>
        <end position="2132"/>
    </location>
</feature>
<feature type="helix" evidence="13">
    <location>
        <begin position="2136"/>
        <end position="2140"/>
    </location>
</feature>
<feature type="helix" evidence="13">
    <location>
        <begin position="2146"/>
        <end position="2154"/>
    </location>
</feature>
<sequence>MGAQVSRQNVGTHSTQNSVSNGSSLNYFNINYFKDAASSGASRLDFSQDPSKFTDPVKDVLEKGIPTLQSPSVEACGYSDRIIQITRGDSTITSQDVANAVVGYGVWPHYLTPQDATAIDKPTQPDTSSNRFYTLESKHWNGDSKGWWWKLPDALKEMGIFGENMYYHFLGRSGYTVHVQCNASKFHQGTLLVAMIPEHQLASAKNGSVTAGYNLTHPGEAGRVVGQQRDANLRQPSDDSWLNFDGTLLGNLLIFPHQFINLRSNNSATLIVPYVNAVPMDSMLRHNNWSLVIIPISPLRSETTSSNIRPITVSISPMCAEFSGARAKNVRQGLPVYITPGSGQFMTTDDMQSPCALPWYHPTKEISIPGEVKNLIEMCQVDTLIPVNNVGTNVGNISMYTVQLGNQMDMAQEVFAIKVDITSQPLATTLIGEIASYYTHWTGSLRFSFMFCGTANTTLKLLLAYTPPGIDKPATRKDAMLGTHVVWDVGLQSTISLVVPWVSASHFRLTANDKYSMAGYITCWYQTNLVVPPNTPQTADMLCFVSACKDFCLRMARDTDLHIQSGPIEQNPVENYIDEVLNEVLVVPNIKESHHTTSNSAPLLDAAETGHTSNVQPEDAIETRYVMTSQTRDEMSIESFLGRSGCVHISRIKVDYNDYNGVNKNFTTWKITLQEMAQIRRKFELFTYVRFDSEVTLVPCIAGRGDDIGHVVMQYMYVPPGAPIPKTRNDFSWQSGTNMSIFWQHGQPFPRFSLPFLSIASAYYMFYDGYDGDNSSSKYGSIVTNDMGTICSRIVTEKQEHPVVITTHIYHKAKHTKAWCPRPPRAVPYTHSRVTNYVPKTGDVTTAIVPRASMKTVGPSDLYVHVGNLIYRNLHLFNSEMHDSILVSYSSDLIIYRTNTTGDDYIPSCNCTEATYYCKHKNRYYPIKVTPHDWYEIQESEYYPKHIQYNLLIGEGPCEPGDCGGKLLCRHGVIGIITAGGEGHVAFTDLRQFQCAEEQGITDYIHMLGEAFGNGFVDSVKEQINAINPINSISKKVIKWLLRIISAMVIIIRNSSDPQTIIATLTLIGCNGSPWRFLKEKFCKWTQLTYIHKESDSWLKKFTEMCNAARGLEWIGNKISKFIDWMKSMLPQAQLKVKYLNEIKKLSLLEKQIENLRAADNATQEKIKCEIDTLHDLSCKFLPLYAHEAKRIKVLYNKCSNIIKQRKRSEPVAVMIHGPPGTGKSITTNFLARMITNESDVYSLPPDPKYFDGYDNQSVVIMDDIMQNPDGEDMTLFCQMVSSVTFIPPMADLPDKGKPFDSRFVLCSTNHSLLAPPTISSLPAMNRRFFFDLDIVVHDNYKDAQGKLNVSKAFQPCNVNTKIGNAKCCPFVCGKAVSFKDRSTCSTYTLAQVYNHILEEDKRRRQVVDVMSAIFQGPISLDAPPPPAIADLLQSVRTPEVIKYCQDNKWIVPAECQIERDLSIANSIITIIANIISIAGIIFVIYKLFCTLQGPYSGEPKPKTKMPERRVVAQGPEEEFGRSILKNNTCVITTDNGKFTGLGIYDRTLIIPTHADPGREVQVNGIHTKVLDSYDLYNRDGVKLEITVIQLDRNEKFRDIRKYIPETEDDYPECNLALSANQVEPTIIKVGDVVSYGNILLSGNQTARMLKYNYPTKSGYCGGVLYKIGQILGIHVGGNGRDGFSAMLLRSYFTDTQGQIKISKHANECGLPTIHTPSKTKLQPSVFYDVFPGSKEPAVSRDNDPRLKVNFKEALFSKYKGNTECSLNQHMEIAIAHYSAQLITLDIDSKPIALEDSVFGIEGLEALDLNTSAGFPYVTMGIKKRDLINNKTKDISRLKEALDKYGVDLPMITFLKDELRKKEKISAGKTRVIEASSINDTILFRTTFGNLFSKFHLNPGVVTGSAVGCDPETFWSKIPVMLDGDCIMAFDYTNYDGSIHPVWFQALKKVLENLSFQSNLIDRLCYSKHLFKSTYYEVAGGVPSGCSGTSIFNTMINNIIIRTLVLDAYKNIDLDKLKIIAYGDDVIFSYKYTLDMEAIANEGKKYGLTITPADKSTEFKKLDYNNVTFLKRGFKQDEKHTFLIHPTFPVEEIYESIRWTKKPSQMQEHVLSLCHLMWHNGRKVYEDFSSKIRSVSAGRALYIPPYDLLKHEWYEKF</sequence>
<comment type="function">
    <molecule>Capsid protein VP1</molecule>
    <text evidence="2">Forms an icosahedral capsid of pseudo T=3 symmetry with capsid proteins VP2 and VP3 (By similarity). The capsid is 300 Angstroms in diameter, composed of 60 copies of each capsid protein and enclosing the viral positive strand RNA genome (By similarity). Capsid protein VP1 mainly forms the vertices of the capsid (By similarity). Capsid protein VP1 interacts with host cell receptor to provide virion attachment to target host cells (By similarity). This attachment induces virion internalization (By similarity). Tyrosine kinases are probably involved in the entry process (By similarity). After binding to its receptor, the capsid undergoes conformational changes (By similarity). Capsid protein VP1 N-terminus (that contains an amphipathic alpha-helix) and capsid protein VP4 are externalized (By similarity). Together, they shape a pore in the host membrane through which viral genome is translocated to host cell cytoplasm (By similarity).</text>
</comment>
<comment type="function">
    <molecule>Capsid protein VP2</molecule>
    <text evidence="2">Forms an icosahedral capsid of pseudo T=3 symmetry with capsid proteins VP2 and VP3 (By similarity). The capsid is 300 Angstroms in diameter, composed of 60 copies of each capsid protein and enclosing the viral positive strand RNA genome (By similarity).</text>
</comment>
<comment type="function">
    <molecule>Capsid protein VP3</molecule>
    <text evidence="2">Forms an icosahedral capsid of pseudo T=3 symmetry with capsid proteins VP2 and VP3 (By similarity). The capsid is 300 Angstroms in diameter, composed of 60 copies of each capsid protein and enclosing the viral positive strand RNA genome (By similarity).</text>
</comment>
<comment type="function">
    <molecule>Capsid protein VP4</molecule>
    <text evidence="2">Lies on the inner surface of the capsid shell (By similarity). After binding to the host receptor, the capsid undergoes conformational changes (By similarity). Capsid protein VP4 is released, Capsid protein VP1 N-terminus is externalized, and together, they shape a pore in the host membrane through which the viral genome is translocated into the host cell cytoplasm (By similarity).</text>
</comment>
<comment type="function">
    <molecule>Capsid protein VP0</molecule>
    <text evidence="2">Component of immature procapsids, which is cleaved into capsid proteins VP4 and VP2 after maturation (By similarity). Allows the capsid to remain inactive before the maturation step (By similarity).</text>
</comment>
<comment type="function">
    <molecule>Protease 2A</molecule>
    <text evidence="2 3 6">Cysteine protease that cleaves viral polyprotein and specific host proteins (By similarity). It is responsible for the autocatalytic cleavage between the P1 and P2 regions, which is the first cleavage occurring in the polyprotein (By similarity). Also cleaves the host translation initiation factor EIF4G1, in order to shut down the capped cellular mRNA translation (By similarity). Inhibits the host nucleus-cytoplasm protein and RNA trafficking by cleaving host members of the nuclear pores (By similarity). Counteracts stress granule formation probably by antagonizing its assembly or promoting its dissassembly (By similarity).</text>
</comment>
<comment type="function">
    <molecule>Protein 2B</molecule>
    <text evidence="2">Plays an essential role in the virus replication cycle by acting as a viroporin. Creates a pore in the host endoplasmic reticulum and as a consequence releases Ca2+ in the cytoplasm of infected cell. In turn, high levels of cytoplasmic calcium may trigger membrane trafficking and transport of viral ER-associated proteins to viroplasms, sites of viral genome replication.</text>
</comment>
<comment type="function">
    <molecule>Protein 2C</molecule>
    <text evidence="2">Induces and associates with structural rearrangements of intracellular membranes. Displays RNA-binding, nucleotide binding and NTPase activities. May play a role in virion morphogenesis and viral RNA encapsidation by interacting with the capsid protein VP3.</text>
</comment>
<comment type="function">
    <molecule>Protein 3AB</molecule>
    <text evidence="2">Localizes the viral replication complex to the surface of membranous vesicles. Together with protein 3CD binds the Cis-Active RNA Element (CRE) which is involved in RNA synthesis initiation. Acts as a cofactor to stimulate the activity of 3D polymerase, maybe through a nucleid acid chaperone activity.</text>
</comment>
<comment type="function">
    <molecule>Protein 3A</molecule>
    <text evidence="2 6">Localizes the viral replication complex to the surface of membranous vesicles (By similarity). It inhibits host cell endoplasmic reticulum-to-Golgi apparatus transport and causes the disassembly of the Golgi complex, possibly through GBF1 interaction (By similarity). This would result in depletion of MHC, trail receptors and IFN receptors at the host cell surface (By similarity). Plays an essential role in viral RNA replication by recruiting ACBD3 and PI4KB at the viral replication sites, thereby allowing the formation of the rearranged membranous structures where viral replication takes place (By similarity).</text>
</comment>
<comment type="function">
    <molecule>Viral protein genome-linked</molecule>
    <text evidence="2">Acts as a primer for viral RNA replication and remains covalently bound to viral genomic RNA. VPg is uridylylated prior to priming replication into VPg-pUpU. The oriI viral genomic sequence may act as a template for this. The VPg-pUpU is then used as primer on the genomic RNA poly(A) by the RNA-dependent RNA polymerase to replicate the viral genome. During genome replication, the VPg-RNA linkage is removed by the host TDP2, thereby accelerating replication. During the late stage of the replication cycle, host TDP2 is excluded from sites of viral RNA synthesis and encapsidation, allowing for the generation of progeny virions.</text>
</comment>
<comment type="function">
    <molecule>Protein 3CD</molecule>
    <text evidence="2">Involved in the viral replication complex and viral polypeptide maturation. It exhibits protease activity with a specificity and catalytic efficiency that is different from protease 3C. Protein 3CD lacks polymerase activity. Protein 3CD binds to the 5'UTR of the viral genome.</text>
</comment>
<comment type="function">
    <molecule>RNA-directed RNA polymerase</molecule>
    <text evidence="2">Replicates the viral genomic RNA on the surface of intracellular membranes. May form linear arrays of subunits that propagate along a strong head-to-tail interaction called interface-I. Covalently attaches UMP to a tyrosine of VPg, which is used to prime RNA synthesis. The positive stranded RNA genome is first replicated at virus induced membranous vesicles, creating a dsRNA genomic replication form. This dsRNA is then used as template to synthesize positive stranded RNA genomes. ss(+)RNA genomes are either translated, replicated or encapsidated.</text>
</comment>
<comment type="function">
    <molecule>Protease 3C</molecule>
    <text evidence="2 4">Major viral protease that mediates proteolytic processing of the polyprotein (By similarity). Cleaves host EIF5B, contributing to host translation shutoff (By similarity). Also cleaves host PABPC1, contributing to host translation shutoff (By similarity). Cleaves host NLRP1, triggers host N-glycine-mediated degradation of the autoinhibitory NLRP1 N-terminal fragment (By similarity).</text>
</comment>
<comment type="catalytic activity">
    <molecule>Protein 2C</molecule>
    <reaction evidence="2">
        <text>a ribonucleoside 5'-triphosphate + H2O = a ribonucleoside 5'-diphosphate + phosphate + H(+)</text>
        <dbReference type="Rhea" id="RHEA:23680"/>
        <dbReference type="ChEBI" id="CHEBI:15377"/>
        <dbReference type="ChEBI" id="CHEBI:15378"/>
        <dbReference type="ChEBI" id="CHEBI:43474"/>
        <dbReference type="ChEBI" id="CHEBI:57930"/>
        <dbReference type="ChEBI" id="CHEBI:61557"/>
        <dbReference type="EC" id="3.6.1.15"/>
    </reaction>
</comment>
<comment type="catalytic activity">
    <molecule>Protease 2A</molecule>
    <reaction evidence="2">
        <text>Selective cleavage of Tyr-|-Gly bond in the picornavirus polyprotein.</text>
        <dbReference type="EC" id="3.4.22.29"/>
    </reaction>
</comment>
<comment type="catalytic activity">
    <molecule>RNA-directed RNA polymerase</molecule>
    <reaction evidence="9">
        <text>RNA(n) + a ribonucleoside 5'-triphosphate = RNA(n+1) + diphosphate</text>
        <dbReference type="Rhea" id="RHEA:21248"/>
        <dbReference type="Rhea" id="RHEA-COMP:14527"/>
        <dbReference type="Rhea" id="RHEA-COMP:17342"/>
        <dbReference type="ChEBI" id="CHEBI:33019"/>
        <dbReference type="ChEBI" id="CHEBI:61557"/>
        <dbReference type="ChEBI" id="CHEBI:140395"/>
        <dbReference type="EC" id="2.7.7.48"/>
    </reaction>
</comment>
<comment type="catalytic activity">
    <molecule>Protease 3C</molecule>
    <reaction evidence="11">
        <text>Selective cleavage of Gln-|-Gly bond in the poliovirus polyprotein. In other picornavirus reactions Glu may be substituted for Gln, and Ser or Thr for Gly.</text>
        <dbReference type="EC" id="3.4.22.28"/>
    </reaction>
</comment>
<comment type="cofactor">
    <molecule>RNA-directed RNA polymerase</molecule>
    <cofactor evidence="2">
        <name>Mg(2+)</name>
        <dbReference type="ChEBI" id="CHEBI:18420"/>
    </cofactor>
    <text evidence="2 5">Binds 2 magnesium ions that constitute a dinuclear catalytic metal center (By similarity). The magnesium ions are not prebound but only present for catalysis (By similarity). Requires the presence of 3CDpro or 3CPro (By similarity).</text>
</comment>
<comment type="activity regulation">
    <molecule>RNA-directed RNA polymerase</molecule>
    <text evidence="2">Replication or transcription is subject to high level of random mutations by the nucleotide analog ribavirin.</text>
</comment>
<comment type="subunit">
    <molecule>Capsid protein VP0</molecule>
    <text evidence="2">Interacts with capsid protein VP1 and capsid protein VP3 to form heterotrimeric protomers.</text>
</comment>
<comment type="subunit">
    <molecule>Capsid protein VP1</molecule>
    <text evidence="2">Interacts with capsid protein VP0, and capsid protein VP3 to form heterotrimeric protomers (By similarity). Five protomers subsequently associate to form pentamers which serve as building blocks for the capsid (By similarity). Interacts with capsid protein VP2, capsid protein VP3 and capsid protein VP4 following cleavage of capsid protein VP0 (By similarity).</text>
</comment>
<comment type="subunit">
    <molecule>Capsid protein VP2</molecule>
    <text evidence="2">Interacts with capsid protein VP1 and capsid protein VP3 in the mature capsid.</text>
</comment>
<comment type="subunit">
    <molecule>Capsid protein VP3</molecule>
    <text evidence="2">Interacts with capsid protein VP0 and capsid protein VP1 to form heterotrimeric protomers (By similarity). Five protomers subsequently associate to form pentamers which serve as building blocks for the capsid (By similarity). Interacts with capsid protein VP4 in the mature capsid (By similarity). Interacts with protein 2C; this interaction may be important for virion morphogenesis (By similarity).</text>
</comment>
<comment type="subunit">
    <molecule>Capsid protein VP4</molecule>
    <text evidence="2">Interacts with capsid protein VP1 and capsid protein VP3.</text>
</comment>
<comment type="subunit">
    <molecule>Protease 2A</molecule>
    <text evidence="6">Homodimer.</text>
</comment>
<comment type="subunit">
    <molecule>Protein 2C</molecule>
    <text evidence="2">Homohexamer; forms a hexameric ring structure with 6-fold symmetry characteristic of AAA+ ATPases (By similarity). Interacts (via N-terminus) with host RTN3 (via reticulon domain); this interaction is important for viral replication (By similarity). Interacts with capsid protein VP3; this interaction may be important for virion morphogenesis (By similarity).</text>
</comment>
<comment type="subunit">
    <molecule>Protein 3AB</molecule>
    <text evidence="2">Interacts with protein 3CD.</text>
</comment>
<comment type="subunit">
    <molecule>Protein 3A</molecule>
    <text evidence="2">Homodimer (By similarity). Interacts with host GBF1 (By similarity). Interacts (via GOLD domain) with host ACBD3 (via GOLD domain); this interaction allows the formation of a viral protein 3A/ACBD3 heterotetramer with a 2:2 stoichiometry, which will stimulate the recruitment of host PI4KB in order to synthesize PI4P at the viral RNA replication sites (By similarity).</text>
</comment>
<comment type="subunit">
    <molecule>Viral protein genome-linked</molecule>
    <text evidence="2">Interacts with RNA-directed RNA polymerase.</text>
</comment>
<comment type="subunit">
    <molecule>Protein 3CD</molecule>
    <text evidence="2">Interacts with protein 3AB and with RNA-directed RNA polymerase.</text>
</comment>
<comment type="subunit">
    <molecule>RNA-directed RNA polymerase</molecule>
    <text evidence="2">Interacts with Viral protein genome-linked and with protein 3CD.</text>
</comment>
<comment type="subcellular location">
    <molecule>Capsid protein VP0</molecule>
    <subcellularLocation>
        <location>Virion</location>
    </subcellularLocation>
    <subcellularLocation>
        <location evidence="12">Host cytoplasm</location>
    </subcellularLocation>
</comment>
<comment type="subcellular location">
    <molecule>Capsid protein VP4</molecule>
    <subcellularLocation>
        <location>Virion</location>
    </subcellularLocation>
</comment>
<comment type="subcellular location">
    <molecule>Capsid protein VP2</molecule>
    <subcellularLocation>
        <location evidence="2">Virion</location>
    </subcellularLocation>
    <subcellularLocation>
        <location evidence="12">Host cytoplasm</location>
    </subcellularLocation>
</comment>
<comment type="subcellular location">
    <molecule>Capsid protein VP3</molecule>
    <subcellularLocation>
        <location evidence="2">Virion</location>
    </subcellularLocation>
    <subcellularLocation>
        <location evidence="12">Host cytoplasm</location>
    </subcellularLocation>
</comment>
<comment type="subcellular location">
    <molecule>Capsid protein VP1</molecule>
    <subcellularLocation>
        <location evidence="2">Virion</location>
    </subcellularLocation>
    <subcellularLocation>
        <location evidence="12">Host cytoplasm</location>
    </subcellularLocation>
</comment>
<comment type="subcellular location">
    <molecule>Protein 2B</molecule>
    <subcellularLocation>
        <location evidence="12">Host cytoplasmic vesicle membrane</location>
        <topology evidence="12">Peripheral membrane protein</topology>
        <orientation evidence="12">Cytoplasmic side</orientation>
    </subcellularLocation>
    <text>Probably localizes to the surface of intracellular membrane vesicles that are induced after virus infection as the site for viral RNA replication. These vesicles are derived from the endoplasmic reticulum.</text>
</comment>
<comment type="subcellular location">
    <molecule>Protein 2C</molecule>
    <subcellularLocation>
        <location evidence="12">Host cytoplasmic vesicle membrane</location>
        <topology evidence="12">Peripheral membrane protein</topology>
        <orientation evidence="12">Cytoplasmic side</orientation>
    </subcellularLocation>
    <text>Probably localizes to the surface of intracellular membrane vesicles that are induced after virus infection as the site for viral RNA replication. These vesicles are derived from the endoplasmic reticulum.</text>
</comment>
<comment type="subcellular location">
    <molecule>Protein 3A</molecule>
    <subcellularLocation>
        <location evidence="12">Host cytoplasmic vesicle membrane</location>
        <topology evidence="12">Peripheral membrane protein</topology>
        <orientation evidence="12">Cytoplasmic side</orientation>
    </subcellularLocation>
    <text>Probably localizes to the surface of intracellular membrane vesicles that are induced after virus infection as the site for viral RNA replication. These vesicles are derived from the endoplasmic reticulum.</text>
</comment>
<comment type="subcellular location">
    <molecule>Protein 3AB</molecule>
    <subcellularLocation>
        <location evidence="12">Host cytoplasmic vesicle membrane</location>
        <topology evidence="12">Peripheral membrane protein</topology>
        <orientation evidence="12">Cytoplasmic side</orientation>
    </subcellularLocation>
    <text>Probably localizes to the surface of intracellular membrane vesicles that are induced after virus infection as the site for viral RNA replication. These vesicles are derived from the endoplasmic reticulum.</text>
</comment>
<comment type="subcellular location">
    <molecule>Viral protein genome-linked</molecule>
    <subcellularLocation>
        <location evidence="2">Virion</location>
    </subcellularLocation>
    <subcellularLocation>
        <location evidence="7">Host cytoplasm</location>
    </subcellularLocation>
</comment>
<comment type="subcellular location">
    <molecule>Protease 3C</molecule>
    <subcellularLocation>
        <location>Host cytoplasm</location>
    </subcellularLocation>
</comment>
<comment type="subcellular location">
    <molecule>Protein 3CD</molecule>
    <subcellularLocation>
        <location evidence="2">Host nucleus</location>
    </subcellularLocation>
    <subcellularLocation>
        <location evidence="2">Host cytoplasm</location>
    </subcellularLocation>
    <subcellularLocation>
        <location evidence="12">Host cytoplasmic vesicle membrane</location>
        <topology evidence="12">Peripheral membrane protein</topology>
        <orientation evidence="12">Cytoplasmic side</orientation>
    </subcellularLocation>
    <text>Probably localizes to the surface of intracellular membrane vesicles that are induced after virus infection as the site for viral RNA replication. These vesicles are derived from the endoplasmic reticulum.</text>
</comment>
<comment type="subcellular location">
    <molecule>RNA-directed RNA polymerase</molecule>
    <subcellularLocation>
        <location evidence="12">Host cytoplasmic vesicle membrane</location>
        <topology evidence="12">Peripheral membrane protein</topology>
        <orientation evidence="12">Cytoplasmic side</orientation>
    </subcellularLocation>
    <text>Probably localizes to the surface of intracellular membrane vesicles that are induced after virus infection as the site for viral RNA replication. These vesicles are derived from the endoplasmic reticulum.</text>
</comment>
<comment type="domain">
    <molecule>Protein 2C</molecule>
    <text evidence="1 2">The N-terminus has membrane-binding (By similarity). The N-terminus also displays RNA-binding properties (By similarity). The N-terminus is involved in oligomerization (By similarity). The central part contains an ATPase domain and a degenerate C4-type zinc-finger with only 3 cysteines (By similarity). The C-terminus is involved in RNA-binding (By similarity). The extreme C-terminus contains a region involved in oligomerization (By similarity).</text>
</comment>
<comment type="PTM">
    <molecule>Genome polyprotein</molecule>
    <text evidence="2">Specific enzymatic cleavages in vivo by the viral proteases yield processing intermediates and the mature proteins.</text>
</comment>
<comment type="PTM">
    <molecule>Capsid protein VP0</molecule>
    <text evidence="2">Myristoylation is required for the formation of pentamers during virus assembly. Further assembly of 12 pentamers and a molecule of genomic RNA generates the provirion.</text>
</comment>
<comment type="PTM">
    <molecule>Capsid protein VP0</molecule>
    <text evidence="2">During virion maturation, immature virions are rendered infectious following cleavage of VP0 into VP4 and VP2. This maturation seems to be an autocatalytic event triggered by the presence of RNA in the capsid and it is followed by a conformational change infectious virion.</text>
</comment>
<comment type="PTM">
    <molecule>Capsid protein VP4</molecule>
    <text evidence="2">Myristoylation is required during RNA encapsidation and formation of the mature virus particle.</text>
</comment>
<comment type="PTM">
    <molecule>Viral protein genome-linked</molecule>
    <text evidence="2">VPg is uridylylated by the polymerase into VPg-pUpU. This acts as a nucleotide-peptide primer for the genomic RNA replication.</text>
</comment>
<comment type="similarity">
    <text evidence="12">Belongs to the picornaviruses polyprotein family.</text>
</comment>
<accession>P12916</accession>
<accession>Q82106</accession>
<accession>Q82107</accession>
<accession>Q82108</accession>
<accession>Q82109</accession>
<accession>Q82110</accession>
<accession>Q82111</accession>
<accession>Q82112</accession>
<accession>Q82113</accession>
<accession>Q82114</accession>
<accession>Q82115</accession>
<accession>Q89704</accession>
<proteinExistence type="evidence at protein level"/>
<organismHost>
    <name type="scientific">Homo sapiens</name>
    <name type="common">Human</name>
    <dbReference type="NCBI Taxonomy" id="9606"/>
</organismHost>
<keyword id="KW-0002">3D-structure</keyword>
<keyword id="KW-1072">Activation of host autophagy by virus</keyword>
<keyword id="KW-0067">ATP-binding</keyword>
<keyword id="KW-0068">Autocatalytic cleavage</keyword>
<keyword id="KW-0167">Capsid protein</keyword>
<keyword id="KW-0191">Covalent protein-RNA linkage</keyword>
<keyword id="KW-0235">DNA replication</keyword>
<keyword id="KW-1262">Eukaryotic host gene expression shutoff by virus</keyword>
<keyword id="KW-1193">Eukaryotic host translation shutoff by virus</keyword>
<keyword id="KW-0347">Helicase</keyword>
<keyword id="KW-1035">Host cytoplasm</keyword>
<keyword id="KW-1036">Host cytoplasmic vesicle</keyword>
<keyword id="KW-1190">Host gene expression shutoff by virus</keyword>
<keyword id="KW-1043">Host membrane</keyword>
<keyword id="KW-1192">Host mRNA suppression by virus</keyword>
<keyword id="KW-1048">Host nucleus</keyword>
<keyword id="KW-0945">Host-virus interaction</keyword>
<keyword id="KW-0378">Hydrolase</keyword>
<keyword id="KW-1090">Inhibition of host innate immune response by virus</keyword>
<keyword id="KW-1099">Inhibition of host mRNA nuclear export by virus</keyword>
<keyword id="KW-1088">Inhibition of host RIG-I by virus</keyword>
<keyword id="KW-1113">Inhibition of host RLR pathway by virus</keyword>
<keyword id="KW-0407">Ion channel</keyword>
<keyword id="KW-0406">Ion transport</keyword>
<keyword id="KW-0449">Lipoprotein</keyword>
<keyword id="KW-0460">Magnesium</keyword>
<keyword id="KW-0472">Membrane</keyword>
<keyword id="KW-0479">Metal-binding</keyword>
<keyword id="KW-0519">Myristate</keyword>
<keyword id="KW-0547">Nucleotide-binding</keyword>
<keyword id="KW-0548">Nucleotidyltransferase</keyword>
<keyword id="KW-0597">Phosphoprotein</keyword>
<keyword id="KW-1172">Pore-mediated penetration of viral genome into host cell</keyword>
<keyword id="KW-0645">Protease</keyword>
<keyword id="KW-0677">Repeat</keyword>
<keyword id="KW-0694">RNA-binding</keyword>
<keyword id="KW-0696">RNA-directed RNA polymerase</keyword>
<keyword id="KW-1143">T=pseudo3 icosahedral capsid protein</keyword>
<keyword id="KW-0788">Thiol protease</keyword>
<keyword id="KW-0808">Transferase</keyword>
<keyword id="KW-0813">Transport</keyword>
<keyword id="KW-1161">Viral attachment to host cell</keyword>
<keyword id="KW-0899">Viral immunoevasion</keyword>
<keyword id="KW-1182">Viral ion channel</keyword>
<keyword id="KW-1162">Viral penetration into host cytoplasm</keyword>
<keyword id="KW-0693">Viral RNA replication</keyword>
<keyword id="KW-0946">Virion</keyword>
<keyword id="KW-1164">Virus endocytosis by host</keyword>
<keyword id="KW-1160">Virus entry into host cell</keyword>
<keyword id="KW-0862">Zinc</keyword>
<keyword id="KW-0863">Zinc-finger</keyword>
<name>POLG_HRV1B</name>
<organism>
    <name type="scientific">Human rhinovirus 1B</name>
    <name type="common">HRV-1B</name>
    <dbReference type="NCBI Taxonomy" id="2777147"/>
    <lineage>
        <taxon>Viruses</taxon>
        <taxon>Riboviria</taxon>
        <taxon>Orthornavirae</taxon>
        <taxon>Pisuviricota</taxon>
        <taxon>Pisoniviricetes</taxon>
        <taxon>Picornavirales</taxon>
        <taxon>Picornaviridae</taxon>
        <taxon>Ensavirinae</taxon>
        <taxon>Enterovirus</taxon>
        <taxon>Rhinovirus A</taxon>
    </lineage>
</organism>
<reference key="1">
    <citation type="journal article" date="1988" name="J. Gen. Virol.">
        <title>The nucleotide sequence of human rhinovirus 1B: molecular relationships within the rhinovirus genus.</title>
        <authorList>
            <person name="Hughes P.J."/>
            <person name="North C."/>
            <person name="Jellis C.H."/>
            <person name="Minor P.D."/>
            <person name="Stanway G."/>
        </authorList>
    </citation>
    <scope>NUCLEOTIDE SEQUENCE [GENOMIC RNA]</scope>
</reference>
<reference key="2">
    <citation type="journal article" date="2004" name="Structure">
        <title>The crystal structure of the RNA-dependent RNA polymerase from human rhinovirus: a dual function target for common cold antiviral therapy.</title>
        <authorList>
            <person name="Love R.A."/>
            <person name="Maegley K.A."/>
            <person name="Yu X."/>
            <person name="Ferre R.A."/>
            <person name="Lingardo L.K."/>
            <person name="Diehl W."/>
            <person name="Parge H.E."/>
            <person name="Dragovich P.S."/>
            <person name="Fuhrman S.A."/>
        </authorList>
    </citation>
    <scope>X-RAY CRYSTALLOGRAPHY (2.5 ANGSTROMS) OF 1698-2157</scope>
</reference>
<reference key="3">
    <citation type="journal article" date="2012" name="Adv. Virol.">
        <title>Productive entry pathways of human rhinoviruses.</title>
        <authorList>
            <person name="Fuchs R."/>
            <person name="Blaas D."/>
        </authorList>
    </citation>
    <scope>REVIEW</scope>
</reference>
<protein>
    <recommendedName>
        <fullName>Genome polyprotein</fullName>
    </recommendedName>
    <component>
        <recommendedName>
            <fullName>P1</fullName>
        </recommendedName>
    </component>
    <component>
        <recommendedName>
            <fullName>Capsid protein VP0</fullName>
        </recommendedName>
        <alternativeName>
            <fullName>VP4-VP2</fullName>
        </alternativeName>
    </component>
    <component>
        <recommendedName>
            <fullName>Capsid protein VP4</fullName>
        </recommendedName>
        <alternativeName>
            <fullName>P1A</fullName>
        </alternativeName>
        <alternativeName>
            <fullName>Virion protein 4</fullName>
        </alternativeName>
    </component>
    <component>
        <recommendedName>
            <fullName>Capsid protein VP2</fullName>
        </recommendedName>
        <alternativeName>
            <fullName>P1B</fullName>
        </alternativeName>
        <alternativeName>
            <fullName>Virion protein 2</fullName>
        </alternativeName>
    </component>
    <component>
        <recommendedName>
            <fullName>Capsid protein VP3</fullName>
        </recommendedName>
        <alternativeName>
            <fullName>P1C</fullName>
        </alternativeName>
        <alternativeName>
            <fullName>Virion protein 3</fullName>
        </alternativeName>
    </component>
    <component>
        <recommendedName>
            <fullName>Capsid protein VP1</fullName>
        </recommendedName>
        <alternativeName>
            <fullName>P1D</fullName>
        </alternativeName>
        <alternativeName>
            <fullName>Virion protein 1</fullName>
        </alternativeName>
    </component>
    <component>
        <recommendedName>
            <fullName>P2</fullName>
        </recommendedName>
    </component>
    <component>
        <recommendedName>
            <fullName>Protease 2A</fullName>
            <shortName>P2A</shortName>
            <ecNumber evidence="2">3.4.22.29</ecNumber>
        </recommendedName>
        <alternativeName>
            <fullName>Picornain 2A</fullName>
        </alternativeName>
        <alternativeName>
            <fullName>Protein 2A</fullName>
        </alternativeName>
    </component>
    <component>
        <recommendedName>
            <fullName>Protein 2B</fullName>
            <shortName>P2B</shortName>
        </recommendedName>
    </component>
    <component>
        <recommendedName>
            <fullName>Protein 2C</fullName>
            <shortName>P2C</shortName>
            <ecNumber evidence="2">3.6.1.15</ecNumber>
        </recommendedName>
    </component>
    <component>
        <recommendedName>
            <fullName>P3</fullName>
        </recommendedName>
    </component>
    <component>
        <recommendedName>
            <fullName>Protein 3AB</fullName>
        </recommendedName>
    </component>
    <component>
        <recommendedName>
            <fullName>Protein 3A</fullName>
            <shortName>P3A</shortName>
        </recommendedName>
    </component>
    <component>
        <recommendedName>
            <fullName>Viral protein genome-linked</fullName>
            <shortName>VPg</shortName>
        </recommendedName>
        <alternativeName>
            <fullName>Protein 3B</fullName>
            <shortName>P3B</shortName>
        </alternativeName>
    </component>
    <component>
        <recommendedName>
            <fullName>Protein 3CD</fullName>
            <ecNumber>3.4.22.28</ecNumber>
        </recommendedName>
    </component>
    <component>
        <recommendedName>
            <fullName evidence="11">Protease 3C</fullName>
            <ecNumber evidence="11">3.4.22.28</ecNumber>
        </recommendedName>
        <alternativeName>
            <fullName evidence="11">Picornain 3C</fullName>
            <shortName evidence="11">P3C</shortName>
        </alternativeName>
    </component>
    <component>
        <recommendedName>
            <fullName evidence="9">RNA-directed RNA polymerase</fullName>
            <shortName>RdRp</shortName>
            <ecNumber evidence="9">2.7.7.48</ecNumber>
        </recommendedName>
        <alternativeName>
            <fullName>3D polymerase</fullName>
            <shortName>3Dpol</shortName>
        </alternativeName>
        <alternativeName>
            <fullName>Protein 3D</fullName>
            <shortName>3D</shortName>
        </alternativeName>
    </component>
</protein>